<feature type="chain" id="PRO_0000208493" description="Pannexin-3">
    <location>
        <begin position="1"/>
        <end position="392"/>
    </location>
</feature>
<feature type="topological domain" description="Cytoplasmic" evidence="3">
    <location>
        <begin position="1"/>
        <end position="39"/>
    </location>
</feature>
<feature type="transmembrane region" description="Helical" evidence="4">
    <location>
        <begin position="40"/>
        <end position="60"/>
    </location>
</feature>
<feature type="topological domain" description="Extracellular" evidence="3">
    <location>
        <begin position="61"/>
        <end position="113"/>
    </location>
</feature>
<feature type="transmembrane region" description="Helical" evidence="4">
    <location>
        <begin position="114"/>
        <end position="134"/>
    </location>
</feature>
<feature type="topological domain" description="Cytoplasmic" evidence="3">
    <location>
        <begin position="135"/>
        <end position="215"/>
    </location>
</feature>
<feature type="transmembrane region" description="Helical" evidence="4">
    <location>
        <begin position="216"/>
        <end position="236"/>
    </location>
</feature>
<feature type="topological domain" description="Extracellular" evidence="3">
    <location>
        <begin position="237"/>
        <end position="267"/>
    </location>
</feature>
<feature type="transmembrane region" description="Helical" evidence="4">
    <location>
        <begin position="268"/>
        <end position="288"/>
    </location>
</feature>
<feature type="topological domain" description="Cytoplasmic" evidence="3">
    <location>
        <begin position="289"/>
        <end position="392"/>
    </location>
</feature>
<feature type="glycosylation site" description="N-linked (GlcNAc...) asparagine" evidence="3">
    <location>
        <position position="71"/>
    </location>
</feature>
<name>PANX3_RAT</name>
<comment type="function">
    <text evidence="1">Regulator of osteoblast differentiation by functionning as a Ca(2+) channel in the endoplasmic reticulum which regulates calmodulin (CaM) pathways. Allows ATP release into the extracellular space and activation or purinergic receptors.</text>
</comment>
<comment type="catalytic activity">
    <reaction evidence="1">
        <text>Ca(2+)(in) = Ca(2+)(out)</text>
        <dbReference type="Rhea" id="RHEA:29671"/>
        <dbReference type="ChEBI" id="CHEBI:29108"/>
    </reaction>
</comment>
<comment type="catalytic activity">
    <reaction evidence="1">
        <text>ATP(in) = ATP(out)</text>
        <dbReference type="Rhea" id="RHEA:75687"/>
        <dbReference type="ChEBI" id="CHEBI:30616"/>
    </reaction>
</comment>
<comment type="subunit">
    <text evidence="2">Homoheptameric.</text>
</comment>
<comment type="subcellular location">
    <subcellularLocation>
        <location evidence="1">Cell membrane</location>
        <topology evidence="4">Multi-pass membrane protein</topology>
    </subcellularLocation>
    <subcellularLocation>
        <location evidence="1">Cell junction</location>
        <location evidence="1">Gap junction</location>
    </subcellularLocation>
    <subcellularLocation>
        <location evidence="1">Endoplasmic reticulum membrane</location>
        <topology evidence="4">Multi-pass membrane protein</topology>
    </subcellularLocation>
</comment>
<comment type="tissue specificity">
    <text>Skin.</text>
</comment>
<comment type="similarity">
    <text evidence="4">Belongs to the pannexin family.</text>
</comment>
<organism>
    <name type="scientific">Rattus norvegicus</name>
    <name type="common">Rat</name>
    <dbReference type="NCBI Taxonomy" id="10116"/>
    <lineage>
        <taxon>Eukaryota</taxon>
        <taxon>Metazoa</taxon>
        <taxon>Chordata</taxon>
        <taxon>Craniata</taxon>
        <taxon>Vertebrata</taxon>
        <taxon>Euteleostomi</taxon>
        <taxon>Mammalia</taxon>
        <taxon>Eutheria</taxon>
        <taxon>Euarchontoglires</taxon>
        <taxon>Glires</taxon>
        <taxon>Rodentia</taxon>
        <taxon>Myomorpha</taxon>
        <taxon>Muroidea</taxon>
        <taxon>Muridae</taxon>
        <taxon>Murinae</taxon>
        <taxon>Rattus</taxon>
    </lineage>
</organism>
<accession>P60572</accession>
<evidence type="ECO:0000250" key="1">
    <source>
        <dbReference type="UniProtKB" id="Q8CEG0"/>
    </source>
</evidence>
<evidence type="ECO:0000250" key="2">
    <source>
        <dbReference type="UniProtKB" id="Q96QZ0"/>
    </source>
</evidence>
<evidence type="ECO:0000255" key="3"/>
<evidence type="ECO:0000255" key="4">
    <source>
        <dbReference type="PROSITE-ProRule" id="PRU00351"/>
    </source>
</evidence>
<protein>
    <recommendedName>
        <fullName>Pannexin-3</fullName>
    </recommendedName>
</protein>
<proteinExistence type="evidence at transcript level"/>
<keyword id="KW-0965">Cell junction</keyword>
<keyword id="KW-1003">Cell membrane</keyword>
<keyword id="KW-0256">Endoplasmic reticulum</keyword>
<keyword id="KW-0303">Gap junction</keyword>
<keyword id="KW-0325">Glycoprotein</keyword>
<keyword id="KW-0407">Ion channel</keyword>
<keyword id="KW-0406">Ion transport</keyword>
<keyword id="KW-0472">Membrane</keyword>
<keyword id="KW-1185">Reference proteome</keyword>
<keyword id="KW-0812">Transmembrane</keyword>
<keyword id="KW-1133">Transmembrane helix</keyword>
<keyword id="KW-0813">Transport</keyword>
<reference key="1">
    <citation type="journal article" date="2003" name="Proc. Natl. Acad. Sci. U.S.A.">
        <title>Pannexins, a family of gap junction proteins expressed in brain.</title>
        <authorList>
            <person name="Bruzzone R."/>
            <person name="Hormuzdi S.G."/>
            <person name="Barbe M."/>
            <person name="Herb A."/>
            <person name="Monyer H."/>
        </authorList>
    </citation>
    <scope>NUCLEOTIDE SEQUENCE [MRNA]</scope>
    <source>
        <strain>Wistar</strain>
        <tissue>Hippocampus</tissue>
    </source>
</reference>
<gene>
    <name type="primary">Panx3</name>
    <name type="synonym">Px3</name>
</gene>
<dbReference type="EMBL" id="AJ557017">
    <property type="protein sequence ID" value="CAD89524.1"/>
    <property type="molecule type" value="mRNA"/>
</dbReference>
<dbReference type="RefSeq" id="NP_955430.1">
    <property type="nucleotide sequence ID" value="NM_199398.2"/>
</dbReference>
<dbReference type="SMR" id="P60572"/>
<dbReference type="FunCoup" id="P60572">
    <property type="interactions" value="37"/>
</dbReference>
<dbReference type="STRING" id="10116.ENSRNOP00000041185"/>
<dbReference type="GlyCosmos" id="P60572">
    <property type="glycosylation" value="1 site, No reported glycans"/>
</dbReference>
<dbReference type="GlyGen" id="P60572">
    <property type="glycosylation" value="2 sites"/>
</dbReference>
<dbReference type="PhosphoSitePlus" id="P60572"/>
<dbReference type="PaxDb" id="10116-ENSRNOP00000041185"/>
<dbReference type="Ensembl" id="ENSRNOT00000042717.3">
    <property type="protein sequence ID" value="ENSRNOP00000041185.1"/>
    <property type="gene ID" value="ENSRNOG00000031675.3"/>
</dbReference>
<dbReference type="GeneID" id="315567"/>
<dbReference type="KEGG" id="rno:315567"/>
<dbReference type="UCSC" id="RGD:735137">
    <property type="organism name" value="rat"/>
</dbReference>
<dbReference type="AGR" id="RGD:735137"/>
<dbReference type="CTD" id="116337"/>
<dbReference type="RGD" id="735137">
    <property type="gene designation" value="Panx3"/>
</dbReference>
<dbReference type="eggNOG" id="ENOG502QRDI">
    <property type="taxonomic scope" value="Eukaryota"/>
</dbReference>
<dbReference type="GeneTree" id="ENSGT00940000153972"/>
<dbReference type="HOGENOM" id="CLU_050054_1_0_1"/>
<dbReference type="InParanoid" id="P60572"/>
<dbReference type="OMA" id="GQDKMKS"/>
<dbReference type="OrthoDB" id="10056939at2759"/>
<dbReference type="PhylomeDB" id="P60572"/>
<dbReference type="TreeFam" id="TF333142"/>
<dbReference type="PRO" id="PR:P60572"/>
<dbReference type="Proteomes" id="UP000002494">
    <property type="component" value="Chromosome 8"/>
</dbReference>
<dbReference type="GO" id="GO:0005789">
    <property type="term" value="C:endoplasmic reticulum membrane"/>
    <property type="evidence" value="ECO:0000250"/>
    <property type="project" value="UniProtKB"/>
</dbReference>
<dbReference type="GO" id="GO:0005921">
    <property type="term" value="C:gap junction"/>
    <property type="evidence" value="ECO:0000250"/>
    <property type="project" value="UniProtKB"/>
</dbReference>
<dbReference type="GO" id="GO:0005886">
    <property type="term" value="C:plasma membrane"/>
    <property type="evidence" value="ECO:0000266"/>
    <property type="project" value="RGD"/>
</dbReference>
<dbReference type="GO" id="GO:0005262">
    <property type="term" value="F:calcium channel activity"/>
    <property type="evidence" value="ECO:0000250"/>
    <property type="project" value="UniProtKB"/>
</dbReference>
<dbReference type="GO" id="GO:0055077">
    <property type="term" value="F:gap junction hemi-channel activity"/>
    <property type="evidence" value="ECO:0000250"/>
    <property type="project" value="UniProtKB"/>
</dbReference>
<dbReference type="GO" id="GO:0005198">
    <property type="term" value="F:structural molecule activity"/>
    <property type="evidence" value="ECO:0000250"/>
    <property type="project" value="UniProtKB"/>
</dbReference>
<dbReference type="GO" id="GO:0022829">
    <property type="term" value="F:wide pore channel activity"/>
    <property type="evidence" value="ECO:0000318"/>
    <property type="project" value="GO_Central"/>
</dbReference>
<dbReference type="GO" id="GO:0007267">
    <property type="term" value="P:cell-cell signaling"/>
    <property type="evidence" value="ECO:0000315"/>
    <property type="project" value="RGD"/>
</dbReference>
<dbReference type="GO" id="GO:0006812">
    <property type="term" value="P:monoatomic cation transport"/>
    <property type="evidence" value="ECO:0000318"/>
    <property type="project" value="GO_Central"/>
</dbReference>
<dbReference type="GO" id="GO:0001649">
    <property type="term" value="P:osteoblast differentiation"/>
    <property type="evidence" value="ECO:0000250"/>
    <property type="project" value="UniProtKB"/>
</dbReference>
<dbReference type="GO" id="GO:0032732">
    <property type="term" value="P:positive regulation of interleukin-1 production"/>
    <property type="evidence" value="ECO:0007669"/>
    <property type="project" value="InterPro"/>
</dbReference>
<dbReference type="InterPro" id="IPR000990">
    <property type="entry name" value="Innexin"/>
</dbReference>
<dbReference type="InterPro" id="IPR039099">
    <property type="entry name" value="Pannexin"/>
</dbReference>
<dbReference type="PANTHER" id="PTHR15759">
    <property type="entry name" value="PANNEXIN"/>
    <property type="match status" value="1"/>
</dbReference>
<dbReference type="PANTHER" id="PTHR15759:SF3">
    <property type="entry name" value="PANNEXIN-3"/>
    <property type="match status" value="1"/>
</dbReference>
<dbReference type="Pfam" id="PF00876">
    <property type="entry name" value="Innexin"/>
    <property type="match status" value="1"/>
</dbReference>
<dbReference type="PROSITE" id="PS51013">
    <property type="entry name" value="PANNEXIN"/>
    <property type="match status" value="1"/>
</dbReference>
<sequence length="392" mass="44978">MSLAHTAAEYMLSDALLPDRRGSRLKGLRLELPLDKMVKFVTVGFPLLLMSLAFAQEFSSGSPISCFSPSNFSVRQAVFVDSSCWDSLAHYKQDEAGQYTVKSLWPHKALPYSLLALAVAMYLPVLLWQYAAVPALSSDLLFIISELDKSYNRSIRLVQHMLKIRQKSSDPHVFWDELEKARKERYFEFPLLERYLACKQRSHWLVATYLLRNALLLLFTSATYLYLGHFHLDVFFQEEFSCSIKTGLLHEETHVPELITCRLTSLSVFQIVSVSSVAIYTVLVPVIIYNLTRLCRWDKRLLSIYEMLPAFDLLSRKMLGCPINDLNVILLFLRANISELISFSWLSVLCVLKDTTTQKHNIDTVVDFMTLLAGLEPSKPKHLTQHTYDEHP</sequence>